<protein>
    <recommendedName>
        <fullName>Glycine-rich RNA-binding, abscisic acid-inducible protein</fullName>
    </recommendedName>
</protein>
<keyword id="KW-1185">Reference proteome</keyword>
<keyword id="KW-0694">RNA-binding</keyword>
<keyword id="KW-0346">Stress response</keyword>
<accession>P10979</accession>
<name>GRPA_MAIZE</name>
<organism>
    <name type="scientific">Zea mays</name>
    <name type="common">Maize</name>
    <dbReference type="NCBI Taxonomy" id="4577"/>
    <lineage>
        <taxon>Eukaryota</taxon>
        <taxon>Viridiplantae</taxon>
        <taxon>Streptophyta</taxon>
        <taxon>Embryophyta</taxon>
        <taxon>Tracheophyta</taxon>
        <taxon>Spermatophyta</taxon>
        <taxon>Magnoliopsida</taxon>
        <taxon>Liliopsida</taxon>
        <taxon>Poales</taxon>
        <taxon>Poaceae</taxon>
        <taxon>PACMAD clade</taxon>
        <taxon>Panicoideae</taxon>
        <taxon>Andropogonodae</taxon>
        <taxon>Andropogoneae</taxon>
        <taxon>Tripsacinae</taxon>
        <taxon>Zea</taxon>
    </lineage>
</organism>
<dbReference type="EMBL" id="X12564">
    <property type="protein sequence ID" value="CAA31077.1"/>
    <property type="molecule type" value="Genomic_DNA"/>
</dbReference>
<dbReference type="PIR" id="S04536">
    <property type="entry name" value="S04536"/>
</dbReference>
<dbReference type="SMR" id="P10979"/>
<dbReference type="STRING" id="4577.P10979"/>
<dbReference type="PaxDb" id="4577-GRMZM2G165901_P01"/>
<dbReference type="MaizeGDB" id="69261"/>
<dbReference type="eggNOG" id="KOG0118">
    <property type="taxonomic scope" value="Eukaryota"/>
</dbReference>
<dbReference type="InParanoid" id="P10979"/>
<dbReference type="Proteomes" id="UP000007305">
    <property type="component" value="Unplaced"/>
</dbReference>
<dbReference type="ExpressionAtlas" id="P10979">
    <property type="expression patterns" value="baseline and differential"/>
</dbReference>
<dbReference type="GO" id="GO:0003729">
    <property type="term" value="F:mRNA binding"/>
    <property type="evidence" value="ECO:0000318"/>
    <property type="project" value="GO_Central"/>
</dbReference>
<dbReference type="CDD" id="cd21608">
    <property type="entry name" value="RRM2_NsCP33_like"/>
    <property type="match status" value="1"/>
</dbReference>
<dbReference type="FunFam" id="3.30.70.330:FF:001321">
    <property type="entry name" value="Glycine-rich RNA-binding, abscisic acid-inducible protein"/>
    <property type="match status" value="1"/>
</dbReference>
<dbReference type="Gene3D" id="3.30.70.330">
    <property type="match status" value="1"/>
</dbReference>
<dbReference type="InterPro" id="IPR012677">
    <property type="entry name" value="Nucleotide-bd_a/b_plait_sf"/>
</dbReference>
<dbReference type="InterPro" id="IPR035979">
    <property type="entry name" value="RBD_domain_sf"/>
</dbReference>
<dbReference type="InterPro" id="IPR048289">
    <property type="entry name" value="RRM2_NsCP33-like"/>
</dbReference>
<dbReference type="InterPro" id="IPR000504">
    <property type="entry name" value="RRM_dom"/>
</dbReference>
<dbReference type="InterPro" id="IPR052462">
    <property type="entry name" value="SLIRP/GR-RBP-like"/>
</dbReference>
<dbReference type="PANTHER" id="PTHR48027">
    <property type="entry name" value="HETEROGENEOUS NUCLEAR RIBONUCLEOPROTEIN 87F-RELATED"/>
    <property type="match status" value="1"/>
</dbReference>
<dbReference type="Pfam" id="PF00076">
    <property type="entry name" value="RRM_1"/>
    <property type="match status" value="1"/>
</dbReference>
<dbReference type="SMART" id="SM00360">
    <property type="entry name" value="RRM"/>
    <property type="match status" value="1"/>
</dbReference>
<dbReference type="SUPFAM" id="SSF54928">
    <property type="entry name" value="RNA-binding domain, RBD"/>
    <property type="match status" value="1"/>
</dbReference>
<dbReference type="PROSITE" id="PS50102">
    <property type="entry name" value="RRM"/>
    <property type="match status" value="1"/>
</dbReference>
<gene>
    <name type="primary">RAB15</name>
</gene>
<proteinExistence type="evidence at protein level"/>
<feature type="chain" id="PRO_0000081607" description="Glycine-rich RNA-binding, abscisic acid-inducible protein">
    <location>
        <begin position="1"/>
        <end position="157"/>
    </location>
</feature>
<feature type="domain" description="RRM" evidence="1">
    <location>
        <begin position="8"/>
        <end position="86"/>
    </location>
</feature>
<feature type="region of interest" description="Disordered" evidence="2">
    <location>
        <begin position="82"/>
        <end position="157"/>
    </location>
</feature>
<feature type="compositionally biased region" description="Gly residues" evidence="2">
    <location>
        <begin position="87"/>
        <end position="157"/>
    </location>
</feature>
<evidence type="ECO:0000255" key="1">
    <source>
        <dbReference type="PROSITE-ProRule" id="PRU00176"/>
    </source>
</evidence>
<evidence type="ECO:0000256" key="2">
    <source>
        <dbReference type="SAM" id="MobiDB-lite"/>
    </source>
</evidence>
<sequence length="157" mass="15438">MAAADVEYRCFVGGLAWATSNESLENAFASYGEILDSKVITDRETGRSRGFGFVTFSSENSMLDAIENMNGKELDGRNITVNQAQSRGGGGGGGGYGGGRGGGGYGGGRRDGGYGGGGGYGGRREGGGGGYGGGGGYGGRREGGGGGYGGGGGGWRD</sequence>
<reference key="1">
    <citation type="journal article" date="1988" name="Nature">
        <title>A gene induced by the plant hormone abscisic acid in response to water stress encodes a glycine-rich protein.</title>
        <authorList>
            <person name="Gomez J."/>
            <person name="Sanchez-Martinez D."/>
            <person name="Stiefel V."/>
            <person name="Rigau J."/>
            <person name="Puigdomenech P."/>
            <person name="Pages M."/>
        </authorList>
    </citation>
    <scope>NUCLEOTIDE SEQUENCE [GENOMIC DNA]</scope>
    <source>
        <tissue>Endosperm</tissue>
    </source>
</reference>
<reference key="2">
    <citation type="journal article" date="1989" name="Nature">
        <title>RNP in maize protein.</title>
        <authorList>
            <person name="Mortenson E."/>
            <person name="Dreyfuss G."/>
        </authorList>
    </citation>
    <scope>SIMILARITY TO RNA-BINDING PROTEINS</scope>
</reference>
<comment type="function">
    <text>Possibly has a role in RNA transcription or processing during stress.</text>
</comment>
<comment type="induction">
    <text>By the plant hormone abscisic acid in response to water stress.</text>
</comment>